<feature type="propeptide" id="PRO_0000413847" evidence="2">
    <location>
        <begin position="1" status="less than"/>
        <end position="18"/>
    </location>
</feature>
<feature type="peptide" id="PRO_5000405129" description="Brevinin-1PLa" evidence="3">
    <location>
        <begin position="21"/>
        <end position="44"/>
    </location>
</feature>
<feature type="disulfide bond" evidence="3">
    <location>
        <begin position="38"/>
        <end position="44"/>
    </location>
</feature>
<feature type="non-terminal residue" evidence="5">
    <location>
        <position position="1"/>
    </location>
</feature>
<evidence type="ECO:0000250" key="1">
    <source>
        <dbReference type="UniProtKB" id="Q8QFQ5"/>
    </source>
</evidence>
<evidence type="ECO:0000255" key="2"/>
<evidence type="ECO:0000269" key="3">
    <source>
    </source>
</evidence>
<evidence type="ECO:0000305" key="4"/>
<evidence type="ECO:0000312" key="5">
    <source>
        <dbReference type="EMBL" id="ACC78531.1"/>
    </source>
</evidence>
<accession>B6CPR5</accession>
<name>BR1A_LITPA</name>
<proteinExistence type="evidence at protein level"/>
<keyword id="KW-0878">Amphibian defense peptide</keyword>
<keyword id="KW-0044">Antibiotic</keyword>
<keyword id="KW-0929">Antimicrobial</keyword>
<keyword id="KW-0165">Cleavage on pair of basic residues</keyword>
<keyword id="KW-0903">Direct protein sequencing</keyword>
<keyword id="KW-1015">Disulfide bond</keyword>
<keyword id="KW-0964">Secreted</keyword>
<protein>
    <recommendedName>
        <fullName evidence="5">Brevinin-1PLa</fullName>
    </recommendedName>
</protein>
<reference evidence="5" key="1">
    <citation type="journal article" date="2008" name="Mol. Biol. Evol.">
        <title>Balancing selection at a frog antimicrobial peptide locus: fluctuating immune effector alleles?</title>
        <authorList>
            <person name="Tennessen J.A."/>
            <person name="Blouin M.S."/>
        </authorList>
    </citation>
    <scope>NUCLEOTIDE SEQUENCE [GENOMIC DNA]</scope>
</reference>
<reference evidence="4" key="2">
    <citation type="journal article" date="2000" name="Biochim. Biophys. Acta">
        <title>Multiple antimicrobial peptides and peptides related to bradykinin and neuromedin N isolated from skin secretions of the pickerel frog, Rana palustris.</title>
        <authorList>
            <person name="Basir Y.J."/>
            <person name="Knoop F.C."/>
            <person name="Dulka J."/>
            <person name="Conlon J.M."/>
        </authorList>
    </citation>
    <scope>PROTEIN SEQUENCE OF 21-44</scope>
    <scope>SUBCELLULAR LOCATION</scope>
    <scope>TISSUE SPECIFICITY</scope>
    <scope>MASS SPECTROMETRY</scope>
    <scope>DISULFIDE BOND</scope>
    <source>
        <tissue evidence="3">Skin secretion</tissue>
    </source>
</reference>
<dbReference type="EMBL" id="EU407159">
    <property type="protein sequence ID" value="ACC78531.1"/>
    <property type="molecule type" value="Genomic_DNA"/>
</dbReference>
<dbReference type="EMBL" id="EU407160">
    <property type="protein sequence ID" value="ACC78532.1"/>
    <property type="molecule type" value="Genomic_DNA"/>
</dbReference>
<dbReference type="SMR" id="B6CPR5"/>
<dbReference type="GO" id="GO:0005576">
    <property type="term" value="C:extracellular region"/>
    <property type="evidence" value="ECO:0007669"/>
    <property type="project" value="UniProtKB-SubCell"/>
</dbReference>
<dbReference type="GO" id="GO:0042742">
    <property type="term" value="P:defense response to bacterium"/>
    <property type="evidence" value="ECO:0007669"/>
    <property type="project" value="UniProtKB-KW"/>
</dbReference>
<dbReference type="InterPro" id="IPR012520">
    <property type="entry name" value="Antimicrobial_frog_1"/>
</dbReference>
<dbReference type="Pfam" id="PF08018">
    <property type="entry name" value="Antimicrobial_1"/>
    <property type="match status" value="1"/>
</dbReference>
<sequence length="44" mass="5053">NAEEERRDEPDETDVEVEKRFFPNVASVPGQVLKKIFCAISKKC</sequence>
<comment type="function">
    <text evidence="1">Antimicrobial peptide.</text>
</comment>
<comment type="subcellular location">
    <subcellularLocation>
        <location evidence="3">Secreted</location>
    </subcellularLocation>
</comment>
<comment type="tissue specificity">
    <text evidence="3">Expressed by the skin glands.</text>
</comment>
<comment type="mass spectrometry" mass="2623.2" error="0.5" method="Electrospray" evidence="3"/>
<comment type="similarity">
    <text evidence="2">Belongs to the frog skin active peptide (FSAP) family. Brevinin subfamily.</text>
</comment>
<organism>
    <name type="scientific">Lithobates palustris</name>
    <name type="common">Pickerel frog</name>
    <name type="synonym">Rana palustris</name>
    <dbReference type="NCBI Taxonomy" id="298395"/>
    <lineage>
        <taxon>Eukaryota</taxon>
        <taxon>Metazoa</taxon>
        <taxon>Chordata</taxon>
        <taxon>Craniata</taxon>
        <taxon>Vertebrata</taxon>
        <taxon>Euteleostomi</taxon>
        <taxon>Amphibia</taxon>
        <taxon>Batrachia</taxon>
        <taxon>Anura</taxon>
        <taxon>Neobatrachia</taxon>
        <taxon>Ranoidea</taxon>
        <taxon>Ranidae</taxon>
        <taxon>Lithobates</taxon>
    </lineage>
</organism>